<reference key="1">
    <citation type="journal article" date="2004" name="Mol. Biol. Evol.">
        <title>The evolution of SMC proteins: phylogenetic analysis and structural implications.</title>
        <authorList>
            <person name="Cobbe N."/>
            <person name="Heck M.M.S."/>
        </authorList>
    </citation>
    <scope>NUCLEOTIDE SEQUENCE [MRNA]</scope>
</reference>
<reference key="2">
    <citation type="journal article" date="2004" name="Genome Res.">
        <title>The status, quality, and expansion of the NIH full-length cDNA project: the Mammalian Gene Collection (MGC).</title>
        <authorList>
            <consortium name="The MGC Project Team"/>
        </authorList>
    </citation>
    <scope>NUCLEOTIDE SEQUENCE [LARGE SCALE MRNA]</scope>
    <source>
        <strain>C57BL/6J</strain>
        <tissue>Brain</tissue>
        <tissue>Mammary tumor</tissue>
    </source>
</reference>
<reference key="3">
    <citation type="journal article" date="2005" name="Science">
        <title>The transcriptional landscape of the mammalian genome.</title>
        <authorList>
            <person name="Carninci P."/>
            <person name="Kasukawa T."/>
            <person name="Katayama S."/>
            <person name="Gough J."/>
            <person name="Frith M.C."/>
            <person name="Maeda N."/>
            <person name="Oyama R."/>
            <person name="Ravasi T."/>
            <person name="Lenhard B."/>
            <person name="Wells C."/>
            <person name="Kodzius R."/>
            <person name="Shimokawa K."/>
            <person name="Bajic V.B."/>
            <person name="Brenner S.E."/>
            <person name="Batalov S."/>
            <person name="Forrest A.R."/>
            <person name="Zavolan M."/>
            <person name="Davis M.J."/>
            <person name="Wilming L.G."/>
            <person name="Aidinis V."/>
            <person name="Allen J.E."/>
            <person name="Ambesi-Impiombato A."/>
            <person name="Apweiler R."/>
            <person name="Aturaliya R.N."/>
            <person name="Bailey T.L."/>
            <person name="Bansal M."/>
            <person name="Baxter L."/>
            <person name="Beisel K.W."/>
            <person name="Bersano T."/>
            <person name="Bono H."/>
            <person name="Chalk A.M."/>
            <person name="Chiu K.P."/>
            <person name="Choudhary V."/>
            <person name="Christoffels A."/>
            <person name="Clutterbuck D.R."/>
            <person name="Crowe M.L."/>
            <person name="Dalla E."/>
            <person name="Dalrymple B.P."/>
            <person name="de Bono B."/>
            <person name="Della Gatta G."/>
            <person name="di Bernardo D."/>
            <person name="Down T."/>
            <person name="Engstrom P."/>
            <person name="Fagiolini M."/>
            <person name="Faulkner G."/>
            <person name="Fletcher C.F."/>
            <person name="Fukushima T."/>
            <person name="Furuno M."/>
            <person name="Futaki S."/>
            <person name="Gariboldi M."/>
            <person name="Georgii-Hemming P."/>
            <person name="Gingeras T.R."/>
            <person name="Gojobori T."/>
            <person name="Green R.E."/>
            <person name="Gustincich S."/>
            <person name="Harbers M."/>
            <person name="Hayashi Y."/>
            <person name="Hensch T.K."/>
            <person name="Hirokawa N."/>
            <person name="Hill D."/>
            <person name="Huminiecki L."/>
            <person name="Iacono M."/>
            <person name="Ikeo K."/>
            <person name="Iwama A."/>
            <person name="Ishikawa T."/>
            <person name="Jakt M."/>
            <person name="Kanapin A."/>
            <person name="Katoh M."/>
            <person name="Kawasawa Y."/>
            <person name="Kelso J."/>
            <person name="Kitamura H."/>
            <person name="Kitano H."/>
            <person name="Kollias G."/>
            <person name="Krishnan S.P."/>
            <person name="Kruger A."/>
            <person name="Kummerfeld S.K."/>
            <person name="Kurochkin I.V."/>
            <person name="Lareau L.F."/>
            <person name="Lazarevic D."/>
            <person name="Lipovich L."/>
            <person name="Liu J."/>
            <person name="Liuni S."/>
            <person name="McWilliam S."/>
            <person name="Madan Babu M."/>
            <person name="Madera M."/>
            <person name="Marchionni L."/>
            <person name="Matsuda H."/>
            <person name="Matsuzawa S."/>
            <person name="Miki H."/>
            <person name="Mignone F."/>
            <person name="Miyake S."/>
            <person name="Morris K."/>
            <person name="Mottagui-Tabar S."/>
            <person name="Mulder N."/>
            <person name="Nakano N."/>
            <person name="Nakauchi H."/>
            <person name="Ng P."/>
            <person name="Nilsson R."/>
            <person name="Nishiguchi S."/>
            <person name="Nishikawa S."/>
            <person name="Nori F."/>
            <person name="Ohara O."/>
            <person name="Okazaki Y."/>
            <person name="Orlando V."/>
            <person name="Pang K.C."/>
            <person name="Pavan W.J."/>
            <person name="Pavesi G."/>
            <person name="Pesole G."/>
            <person name="Petrovsky N."/>
            <person name="Piazza S."/>
            <person name="Reed J."/>
            <person name="Reid J.F."/>
            <person name="Ring B.Z."/>
            <person name="Ringwald M."/>
            <person name="Rost B."/>
            <person name="Ruan Y."/>
            <person name="Salzberg S.L."/>
            <person name="Sandelin A."/>
            <person name="Schneider C."/>
            <person name="Schoenbach C."/>
            <person name="Sekiguchi K."/>
            <person name="Semple C.A."/>
            <person name="Seno S."/>
            <person name="Sessa L."/>
            <person name="Sheng Y."/>
            <person name="Shibata Y."/>
            <person name="Shimada H."/>
            <person name="Shimada K."/>
            <person name="Silva D."/>
            <person name="Sinclair B."/>
            <person name="Sperling S."/>
            <person name="Stupka E."/>
            <person name="Sugiura K."/>
            <person name="Sultana R."/>
            <person name="Takenaka Y."/>
            <person name="Taki K."/>
            <person name="Tammoja K."/>
            <person name="Tan S.L."/>
            <person name="Tang S."/>
            <person name="Taylor M.S."/>
            <person name="Tegner J."/>
            <person name="Teichmann S.A."/>
            <person name="Ueda H.R."/>
            <person name="van Nimwegen E."/>
            <person name="Verardo R."/>
            <person name="Wei C.L."/>
            <person name="Yagi K."/>
            <person name="Yamanishi H."/>
            <person name="Zabarovsky E."/>
            <person name="Zhu S."/>
            <person name="Zimmer A."/>
            <person name="Hide W."/>
            <person name="Bult C."/>
            <person name="Grimmond S.M."/>
            <person name="Teasdale R.D."/>
            <person name="Liu E.T."/>
            <person name="Brusic V."/>
            <person name="Quackenbush J."/>
            <person name="Wahlestedt C."/>
            <person name="Mattick J.S."/>
            <person name="Hume D.A."/>
            <person name="Kai C."/>
            <person name="Sasaki D."/>
            <person name="Tomaru Y."/>
            <person name="Fukuda S."/>
            <person name="Kanamori-Katayama M."/>
            <person name="Suzuki M."/>
            <person name="Aoki J."/>
            <person name="Arakawa T."/>
            <person name="Iida J."/>
            <person name="Imamura K."/>
            <person name="Itoh M."/>
            <person name="Kato T."/>
            <person name="Kawaji H."/>
            <person name="Kawagashira N."/>
            <person name="Kawashima T."/>
            <person name="Kojima M."/>
            <person name="Kondo S."/>
            <person name="Konno H."/>
            <person name="Nakano K."/>
            <person name="Ninomiya N."/>
            <person name="Nishio T."/>
            <person name="Okada M."/>
            <person name="Plessy C."/>
            <person name="Shibata K."/>
            <person name="Shiraki T."/>
            <person name="Suzuki S."/>
            <person name="Tagami M."/>
            <person name="Waki K."/>
            <person name="Watahiki A."/>
            <person name="Okamura-Oho Y."/>
            <person name="Suzuki H."/>
            <person name="Kawai J."/>
            <person name="Hayashizaki Y."/>
        </authorList>
    </citation>
    <scope>NUCLEOTIDE SEQUENCE [LARGE SCALE MRNA] OF 1-602</scope>
    <source>
        <strain>NOD</strain>
        <tissue>Thymus</tissue>
    </source>
</reference>
<reference key="4">
    <citation type="journal article" date="2010" name="Cell">
        <title>A tissue-specific atlas of mouse protein phosphorylation and expression.</title>
        <authorList>
            <person name="Huttlin E.L."/>
            <person name="Jedrychowski M.P."/>
            <person name="Elias J.E."/>
            <person name="Goswami T."/>
            <person name="Rad R."/>
            <person name="Beausoleil S.A."/>
            <person name="Villen J."/>
            <person name="Haas W."/>
            <person name="Sowa M.E."/>
            <person name="Gygi S.P."/>
        </authorList>
    </citation>
    <scope>IDENTIFICATION BY MASS SPECTROMETRY [LARGE SCALE ANALYSIS]</scope>
    <source>
        <tissue>Kidney</tissue>
        <tissue>Lung</tissue>
        <tissue>Pancreas</tissue>
        <tissue>Spleen</tissue>
        <tissue>Testis</tissue>
    </source>
</reference>
<reference key="5">
    <citation type="journal article" date="2013" name="Mol. Cell">
        <title>SIRT5-mediated lysine desuccinylation impacts diverse metabolic pathways.</title>
        <authorList>
            <person name="Park J."/>
            <person name="Chen Y."/>
            <person name="Tishkoff D.X."/>
            <person name="Peng C."/>
            <person name="Tan M."/>
            <person name="Dai L."/>
            <person name="Xie Z."/>
            <person name="Zhang Y."/>
            <person name="Zwaans B.M."/>
            <person name="Skinner M.E."/>
            <person name="Lombard D.B."/>
            <person name="Zhao Y."/>
        </authorList>
    </citation>
    <scope>ACETYLATION [LARGE SCALE ANALYSIS] AT LYS-379</scope>
    <scope>IDENTIFICATION BY MASS SPECTROMETRY [LARGE SCALE ANALYSIS]</scope>
    <source>
        <tissue>Embryonic fibroblast</tissue>
    </source>
</reference>
<gene>
    <name type="primary">Smc4</name>
    <name type="synonym">Capc</name>
    <name type="synonym">Smc4l1</name>
</gene>
<feature type="chain" id="PRO_0000119008" description="Structural maintenance of chromosomes protein 4">
    <location>
        <begin position="1"/>
        <end position="1286"/>
    </location>
</feature>
<feature type="domain" description="SMC hinge">
    <location>
        <begin position="611"/>
        <end position="725"/>
    </location>
</feature>
<feature type="region of interest" description="Disordered" evidence="4">
    <location>
        <begin position="1"/>
        <end position="51"/>
    </location>
</feature>
<feature type="coiled-coil region" evidence="3">
    <location>
        <begin position="270"/>
        <end position="589"/>
    </location>
</feature>
<feature type="coiled-coil region" evidence="3">
    <location>
        <begin position="768"/>
        <end position="1018"/>
    </location>
</feature>
<feature type="coiled-coil region" evidence="3">
    <location>
        <begin position="1068"/>
        <end position="1133"/>
    </location>
</feature>
<feature type="binding site" evidence="3">
    <location>
        <begin position="111"/>
        <end position="118"/>
    </location>
    <ligand>
        <name>ATP</name>
        <dbReference type="ChEBI" id="CHEBI:30616"/>
    </ligand>
</feature>
<feature type="modified residue" description="Phosphoserine" evidence="2">
    <location>
        <position position="21"/>
    </location>
</feature>
<feature type="modified residue" description="Phosphoserine" evidence="2">
    <location>
        <position position="27"/>
    </location>
</feature>
<feature type="modified residue" description="Phosphoserine" evidence="2">
    <location>
        <position position="40"/>
    </location>
</feature>
<feature type="modified residue" description="Phosphoserine" evidence="2">
    <location>
        <position position="141"/>
    </location>
</feature>
<feature type="modified residue" description="N6-acetyllysine" evidence="6">
    <location>
        <position position="379"/>
    </location>
</feature>
<feature type="modified residue" description="N6-acetyllysine" evidence="2">
    <location>
        <position position="677"/>
    </location>
</feature>
<feature type="modified residue" description="Phosphoserine" evidence="2">
    <location>
        <position position="980"/>
    </location>
</feature>
<feature type="sequence conflict" description="In Ref. 2; BAC40608." evidence="5" ref="2">
    <original>E</original>
    <variation>V</variation>
    <location>
        <position position="454"/>
    </location>
</feature>
<feature type="helix" evidence="7">
    <location>
        <begin position="596"/>
        <end position="607"/>
    </location>
</feature>
<feature type="strand" evidence="7">
    <location>
        <begin position="608"/>
        <end position="610"/>
    </location>
</feature>
<feature type="strand" evidence="7">
    <location>
        <begin position="613"/>
        <end position="616"/>
    </location>
</feature>
<feature type="helix" evidence="7">
    <location>
        <begin position="617"/>
        <end position="619"/>
    </location>
</feature>
<feature type="helix" evidence="7">
    <location>
        <begin position="625"/>
        <end position="627"/>
    </location>
</feature>
<feature type="helix" evidence="7">
    <location>
        <begin position="628"/>
        <end position="634"/>
    </location>
</feature>
<feature type="helix" evidence="7">
    <location>
        <begin position="636"/>
        <end position="639"/>
    </location>
</feature>
<feature type="strand" evidence="7">
    <location>
        <begin position="640"/>
        <end position="644"/>
    </location>
</feature>
<feature type="helix" evidence="7">
    <location>
        <begin position="646"/>
        <end position="658"/>
    </location>
</feature>
<feature type="strand" evidence="7">
    <location>
        <begin position="666"/>
        <end position="668"/>
    </location>
</feature>
<feature type="helix" evidence="7">
    <location>
        <begin position="669"/>
        <end position="671"/>
    </location>
</feature>
<feature type="helix" evidence="7">
    <location>
        <begin position="673"/>
        <end position="675"/>
    </location>
</feature>
<feature type="helix" evidence="7">
    <location>
        <begin position="685"/>
        <end position="687"/>
    </location>
</feature>
<feature type="helix" evidence="7">
    <location>
        <begin position="691"/>
        <end position="694"/>
    </location>
</feature>
<feature type="helix" evidence="7">
    <location>
        <begin position="700"/>
        <end position="710"/>
    </location>
</feature>
<feature type="strand" evidence="7">
    <location>
        <begin position="714"/>
        <end position="718"/>
    </location>
</feature>
<feature type="helix" evidence="7">
    <location>
        <begin position="719"/>
        <end position="726"/>
    </location>
</feature>
<feature type="strand" evidence="7">
    <location>
        <begin position="735"/>
        <end position="737"/>
    </location>
</feature>
<feature type="strand" evidence="7">
    <location>
        <begin position="749"/>
        <end position="751"/>
    </location>
</feature>
<keyword id="KW-0002">3D-structure</keyword>
<keyword id="KW-0007">Acetylation</keyword>
<keyword id="KW-0067">ATP-binding</keyword>
<keyword id="KW-0131">Cell cycle</keyword>
<keyword id="KW-0132">Cell division</keyword>
<keyword id="KW-0158">Chromosome</keyword>
<keyword id="KW-0175">Coiled coil</keyword>
<keyword id="KW-0963">Cytoplasm</keyword>
<keyword id="KW-0226">DNA condensation</keyword>
<keyword id="KW-0498">Mitosis</keyword>
<keyword id="KW-0547">Nucleotide-binding</keyword>
<keyword id="KW-0539">Nucleus</keyword>
<keyword id="KW-0597">Phosphoprotein</keyword>
<keyword id="KW-1185">Reference proteome</keyword>
<dbReference type="EMBL" id="AJ534940">
    <property type="protein sequence ID" value="CAD59183.1"/>
    <property type="molecule type" value="mRNA"/>
</dbReference>
<dbReference type="EMBL" id="BC005507">
    <property type="protein sequence ID" value="AAH05507.1"/>
    <property type="molecule type" value="mRNA"/>
</dbReference>
<dbReference type="EMBL" id="BC062939">
    <property type="protein sequence ID" value="AAH62939.1"/>
    <property type="molecule type" value="mRNA"/>
</dbReference>
<dbReference type="EMBL" id="AK088350">
    <property type="protein sequence ID" value="BAC40297.1"/>
    <property type="molecule type" value="mRNA"/>
</dbReference>
<dbReference type="EMBL" id="AK088846">
    <property type="protein sequence ID" value="BAC40608.2"/>
    <property type="molecule type" value="mRNA"/>
</dbReference>
<dbReference type="CCDS" id="CCDS17401.1"/>
<dbReference type="RefSeq" id="NP_598547.1">
    <property type="nucleotide sequence ID" value="NM_133786.4"/>
</dbReference>
<dbReference type="RefSeq" id="XP_006502109.1">
    <property type="nucleotide sequence ID" value="XM_006502046.3"/>
</dbReference>
<dbReference type="PDB" id="3L51">
    <property type="method" value="X-ray"/>
    <property type="resolution" value="1.51 A"/>
    <property type="chains" value="B=595-752"/>
</dbReference>
<dbReference type="PDBsum" id="3L51"/>
<dbReference type="SMR" id="Q8CG47"/>
<dbReference type="BioGRID" id="213863">
    <property type="interactions" value="23"/>
</dbReference>
<dbReference type="ComplexPortal" id="CPX-980">
    <property type="entry name" value="Condensin I complex"/>
</dbReference>
<dbReference type="ComplexPortal" id="CPX-986">
    <property type="entry name" value="Condensin II complex"/>
</dbReference>
<dbReference type="CORUM" id="Q8CG47"/>
<dbReference type="FunCoup" id="Q8CG47">
    <property type="interactions" value="2897"/>
</dbReference>
<dbReference type="IntAct" id="Q8CG47">
    <property type="interactions" value="12"/>
</dbReference>
<dbReference type="MINT" id="Q8CG47"/>
<dbReference type="STRING" id="10090.ENSMUSP00000047872"/>
<dbReference type="GlyGen" id="Q8CG47">
    <property type="glycosylation" value="1 site, 1 O-linked glycan (1 site)"/>
</dbReference>
<dbReference type="iPTMnet" id="Q8CG47"/>
<dbReference type="PhosphoSitePlus" id="Q8CG47"/>
<dbReference type="SwissPalm" id="Q8CG47"/>
<dbReference type="jPOST" id="Q8CG47"/>
<dbReference type="PaxDb" id="10090-ENSMUSP00000047872"/>
<dbReference type="PeptideAtlas" id="Q8CG47"/>
<dbReference type="ProteomicsDB" id="261520"/>
<dbReference type="Pumba" id="Q8CG47"/>
<dbReference type="Antibodypedia" id="18504">
    <property type="antibodies" value="255 antibodies from 35 providers"/>
</dbReference>
<dbReference type="DNASU" id="70099"/>
<dbReference type="Ensembl" id="ENSMUST00000042901.15">
    <property type="protein sequence ID" value="ENSMUSP00000047872.9"/>
    <property type="gene ID" value="ENSMUSG00000034349.15"/>
</dbReference>
<dbReference type="GeneID" id="70099"/>
<dbReference type="KEGG" id="mmu:70099"/>
<dbReference type="UCSC" id="uc008pma.1">
    <property type="organism name" value="mouse"/>
</dbReference>
<dbReference type="AGR" id="MGI:1917349"/>
<dbReference type="CTD" id="10051"/>
<dbReference type="MGI" id="MGI:1917349">
    <property type="gene designation" value="Smc4"/>
</dbReference>
<dbReference type="VEuPathDB" id="HostDB:ENSMUSG00000034349"/>
<dbReference type="eggNOG" id="KOG0996">
    <property type="taxonomic scope" value="Eukaryota"/>
</dbReference>
<dbReference type="GeneTree" id="ENSGT00900000141094"/>
<dbReference type="InParanoid" id="Q8CG47"/>
<dbReference type="OMA" id="CPALDNM"/>
<dbReference type="OrthoDB" id="5575062at2759"/>
<dbReference type="PhylomeDB" id="Q8CG47"/>
<dbReference type="TreeFam" id="TF101158"/>
<dbReference type="Reactome" id="R-MMU-2299718">
    <property type="pathway name" value="Condensation of Prophase Chromosomes"/>
</dbReference>
<dbReference type="Reactome" id="R-MMU-2514853">
    <property type="pathway name" value="Condensation of Prometaphase Chromosomes"/>
</dbReference>
<dbReference type="BioGRID-ORCS" id="70099">
    <property type="hits" value="26 hits in 80 CRISPR screens"/>
</dbReference>
<dbReference type="ChiTaRS" id="Smc4">
    <property type="organism name" value="mouse"/>
</dbReference>
<dbReference type="EvolutionaryTrace" id="Q8CG47"/>
<dbReference type="PRO" id="PR:Q8CG47"/>
<dbReference type="Proteomes" id="UP000000589">
    <property type="component" value="Chromosome 3"/>
</dbReference>
<dbReference type="RNAct" id="Q8CG47">
    <property type="molecule type" value="protein"/>
</dbReference>
<dbReference type="Bgee" id="ENSMUSG00000034349">
    <property type="expression patterns" value="Expressed in late embryo and 283 other cell types or tissues"/>
</dbReference>
<dbReference type="ExpressionAtlas" id="Q8CG47">
    <property type="expression patterns" value="baseline and differential"/>
</dbReference>
<dbReference type="GO" id="GO:0000775">
    <property type="term" value="C:chromosome, centromeric region"/>
    <property type="evidence" value="ECO:0000314"/>
    <property type="project" value="MGI"/>
</dbReference>
<dbReference type="GO" id="GO:0000794">
    <property type="term" value="C:condensed nuclear chromosome"/>
    <property type="evidence" value="ECO:0000314"/>
    <property type="project" value="ComplexPortal"/>
</dbReference>
<dbReference type="GO" id="GO:0000796">
    <property type="term" value="C:condensin complex"/>
    <property type="evidence" value="ECO:0000314"/>
    <property type="project" value="MGI"/>
</dbReference>
<dbReference type="GO" id="GO:0005829">
    <property type="term" value="C:cytosol"/>
    <property type="evidence" value="ECO:0007669"/>
    <property type="project" value="Ensembl"/>
</dbReference>
<dbReference type="GO" id="GO:0016607">
    <property type="term" value="C:nuclear speck"/>
    <property type="evidence" value="ECO:0007669"/>
    <property type="project" value="Ensembl"/>
</dbReference>
<dbReference type="GO" id="GO:0005634">
    <property type="term" value="C:nucleus"/>
    <property type="evidence" value="ECO:0000304"/>
    <property type="project" value="MGI"/>
</dbReference>
<dbReference type="GO" id="GO:0005524">
    <property type="term" value="F:ATP binding"/>
    <property type="evidence" value="ECO:0007669"/>
    <property type="project" value="UniProtKB-KW"/>
</dbReference>
<dbReference type="GO" id="GO:0016887">
    <property type="term" value="F:ATP hydrolysis activity"/>
    <property type="evidence" value="ECO:0007669"/>
    <property type="project" value="InterPro"/>
</dbReference>
<dbReference type="GO" id="GO:0003682">
    <property type="term" value="F:chromatin binding"/>
    <property type="evidence" value="ECO:0000314"/>
    <property type="project" value="MGI"/>
</dbReference>
<dbReference type="GO" id="GO:0003697">
    <property type="term" value="F:single-stranded DNA binding"/>
    <property type="evidence" value="ECO:0000314"/>
    <property type="project" value="MGI"/>
</dbReference>
<dbReference type="GO" id="GO:0051301">
    <property type="term" value="P:cell division"/>
    <property type="evidence" value="ECO:0007669"/>
    <property type="project" value="UniProtKB-KW"/>
</dbReference>
<dbReference type="GO" id="GO:0051383">
    <property type="term" value="P:kinetochore organization"/>
    <property type="evidence" value="ECO:0000315"/>
    <property type="project" value="MGI"/>
</dbReference>
<dbReference type="GO" id="GO:0010032">
    <property type="term" value="P:meiotic chromosome condensation"/>
    <property type="evidence" value="ECO:0000315"/>
    <property type="project" value="MGI"/>
</dbReference>
<dbReference type="GO" id="GO:0045132">
    <property type="term" value="P:meiotic chromosome segregation"/>
    <property type="evidence" value="ECO:0000315"/>
    <property type="project" value="MGI"/>
</dbReference>
<dbReference type="GO" id="GO:0007076">
    <property type="term" value="P:mitotic chromosome condensation"/>
    <property type="evidence" value="ECO:0000250"/>
    <property type="project" value="UniProtKB"/>
</dbReference>
<dbReference type="GO" id="GO:1905821">
    <property type="term" value="P:positive regulation of chromosome condensation"/>
    <property type="evidence" value="ECO:0000266"/>
    <property type="project" value="ComplexPortal"/>
</dbReference>
<dbReference type="GO" id="GO:0051984">
    <property type="term" value="P:positive regulation of chromosome segregation"/>
    <property type="evidence" value="ECO:0000315"/>
    <property type="project" value="ComplexPortal"/>
</dbReference>
<dbReference type="GO" id="GO:1905820">
    <property type="term" value="P:positive regulation of chromosome separation"/>
    <property type="evidence" value="ECO:0000315"/>
    <property type="project" value="ComplexPortal"/>
</dbReference>
<dbReference type="GO" id="GO:0000012">
    <property type="term" value="P:single strand break repair"/>
    <property type="evidence" value="ECO:0000304"/>
    <property type="project" value="MGI"/>
</dbReference>
<dbReference type="FunFam" id="1.20.1060.20:FF:000003">
    <property type="entry name" value="Structural maintenance of chromosomes 4"/>
    <property type="match status" value="1"/>
</dbReference>
<dbReference type="FunFam" id="3.30.70.1620:FF:000003">
    <property type="entry name" value="Structural maintenance of chromosomes 4"/>
    <property type="match status" value="1"/>
</dbReference>
<dbReference type="FunFam" id="3.40.50.300:FF:000481">
    <property type="entry name" value="Structural maintenance of chromosomes 4"/>
    <property type="match status" value="1"/>
</dbReference>
<dbReference type="FunFam" id="3.40.50.300:FF:000585">
    <property type="entry name" value="Structural maintenance of chromosomes 4"/>
    <property type="match status" value="1"/>
</dbReference>
<dbReference type="Gene3D" id="1.20.1060.20">
    <property type="match status" value="1"/>
</dbReference>
<dbReference type="Gene3D" id="1.20.5.170">
    <property type="match status" value="1"/>
</dbReference>
<dbReference type="Gene3D" id="3.30.70.1620">
    <property type="match status" value="1"/>
</dbReference>
<dbReference type="Gene3D" id="3.40.50.300">
    <property type="entry name" value="P-loop containing nucleotide triphosphate hydrolases"/>
    <property type="match status" value="2"/>
</dbReference>
<dbReference type="InterPro" id="IPR027417">
    <property type="entry name" value="P-loop_NTPase"/>
</dbReference>
<dbReference type="InterPro" id="IPR003395">
    <property type="entry name" value="RecF/RecN/SMC_N"/>
</dbReference>
<dbReference type="InterPro" id="IPR024704">
    <property type="entry name" value="SMC"/>
</dbReference>
<dbReference type="InterPro" id="IPR010935">
    <property type="entry name" value="SMC_hinge"/>
</dbReference>
<dbReference type="InterPro" id="IPR036277">
    <property type="entry name" value="SMC_hinge_sf"/>
</dbReference>
<dbReference type="PANTHER" id="PTHR18937:SF172">
    <property type="entry name" value="STRUCTURAL MAINTENANCE OF CHROMOSOMES PROTEIN"/>
    <property type="match status" value="1"/>
</dbReference>
<dbReference type="PANTHER" id="PTHR18937">
    <property type="entry name" value="STRUCTURAL MAINTENANCE OF CHROMOSOMES SMC FAMILY MEMBER"/>
    <property type="match status" value="1"/>
</dbReference>
<dbReference type="Pfam" id="PF06470">
    <property type="entry name" value="SMC_hinge"/>
    <property type="match status" value="1"/>
</dbReference>
<dbReference type="Pfam" id="PF02463">
    <property type="entry name" value="SMC_N"/>
    <property type="match status" value="1"/>
</dbReference>
<dbReference type="PIRSF" id="PIRSF005719">
    <property type="entry name" value="SMC"/>
    <property type="match status" value="1"/>
</dbReference>
<dbReference type="SMART" id="SM00968">
    <property type="entry name" value="SMC_hinge"/>
    <property type="match status" value="1"/>
</dbReference>
<dbReference type="SUPFAM" id="SSF52540">
    <property type="entry name" value="P-loop containing nucleoside triphosphate hydrolases"/>
    <property type="match status" value="1"/>
</dbReference>
<dbReference type="SUPFAM" id="SSF75553">
    <property type="entry name" value="Smc hinge domain"/>
    <property type="match status" value="1"/>
</dbReference>
<dbReference type="SUPFAM" id="SSF57997">
    <property type="entry name" value="Tropomyosin"/>
    <property type="match status" value="1"/>
</dbReference>
<name>SMC4_MOUSE</name>
<accession>Q8CG47</accession>
<accession>Q8BTS7</accession>
<accession>Q8BTY9</accession>
<accession>Q99K21</accession>
<protein>
    <recommendedName>
        <fullName>Structural maintenance of chromosomes protein 4</fullName>
        <shortName>SMC protein 4</shortName>
        <shortName>SMC-4</shortName>
    </recommendedName>
    <alternativeName>
        <fullName>Chromosome-associated polypeptide C</fullName>
    </alternativeName>
    <alternativeName>
        <fullName>XCAP-C homolog</fullName>
    </alternativeName>
</protein>
<comment type="function">
    <text evidence="1">Central component of the condensin complex, a complex required for conversion of interphase chromatin into mitotic-like condense chromosomes. The condensin complex probably introduces positive supercoils into relaxed DNA in the presence of type I topoisomerases and converts nicked DNA into positive knotted forms in the presence of type II topoisomerases (By similarity).</text>
</comment>
<comment type="subunit">
    <text evidence="1">Forms a heterodimer with SMC2. Component of the condensin complex, which contains the SMC2 and SMC4 heterodimer, and three non SMC subunits that probably regulate the complex: BRRN1/CAPH, CNAP1/CAPD2 and CAPG (By similarity).</text>
</comment>
<comment type="interaction">
    <interactant intactId="EBI-6921575">
        <id>Q8CG47</id>
    </interactant>
    <interactant intactId="EBI-6921536">
        <id>Q00899</id>
        <label>Yy1</label>
    </interactant>
    <organismsDiffer>false</organismsDiffer>
    <experiments>2</experiments>
</comment>
<comment type="subcellular location">
    <subcellularLocation>
        <location evidence="1">Nucleus</location>
    </subcellularLocation>
    <subcellularLocation>
        <location evidence="1">Cytoplasm</location>
    </subcellularLocation>
    <subcellularLocation>
        <location evidence="1">Chromosome</location>
    </subcellularLocation>
    <text evidence="1">In interphase cells, the majority of the condensin complex is found in the cytoplasm, while a minority of the complex is associated with chromatin. A subpopulation of the complex however remains associated with chromosome foci in interphase cells. During mitosis, most of the condensin complex is associated with the chromatin. At the onset of prophase, the regulatory subunits of the complex are phosphorylated by CDC2, leading to condensin's association with chromosome arms and to chromosome condensation. Dissociation from chromosomes is observed in late telophase (By similarity).</text>
</comment>
<comment type="domain">
    <text evidence="1">The SMC hinge domain, which separates the large intramolecular coiled coil regions, allows the heterodimerization with SMC2, forming a V-shaped heterodimer.</text>
</comment>
<comment type="similarity">
    <text evidence="5">Belongs to the SMC family. SMC4 subfamily.</text>
</comment>
<organism>
    <name type="scientific">Mus musculus</name>
    <name type="common">Mouse</name>
    <dbReference type="NCBI Taxonomy" id="10090"/>
    <lineage>
        <taxon>Eukaryota</taxon>
        <taxon>Metazoa</taxon>
        <taxon>Chordata</taxon>
        <taxon>Craniata</taxon>
        <taxon>Vertebrata</taxon>
        <taxon>Euteleostomi</taxon>
        <taxon>Mammalia</taxon>
        <taxon>Eutheria</taxon>
        <taxon>Euarchontoglires</taxon>
        <taxon>Glires</taxon>
        <taxon>Rodentia</taxon>
        <taxon>Myomorpha</taxon>
        <taxon>Muroidea</taxon>
        <taxon>Muridae</taxon>
        <taxon>Murinae</taxon>
        <taxon>Mus</taxon>
        <taxon>Mus</taxon>
    </lineage>
</organism>
<sequence length="1286" mass="146895">MRRKGTKPSTACHQEEGPPPSQDGAHSDEEMEQPAGEAESAAPAKPPGEELDNRSLEEILNSIPPPPPPAMASEAGAPRLMITHIVNQNFKSYAGEKVLGPFHKRFSCIIGPNGSGKSNVIDSMLFVFGYRAQKIRSKKLSVLIHNSDEHKDIQSCTVEVHFQKIIDKEGDDYEVLPNSNFYVSRTAYRDSTSVYHISGKKKTFKDVGNLLRSHGIDLDHNRFLILQGEVEQIAMMKPKGQTEHDEGMLEYLEDIIGCGRLNEPIKVLCRRVEILNEHRGEKLNRVKMVEKEKDALEGEKNIAIEFLTLENEMFKKKNHICQYYIYDLQNRIAEITTQKEKIHEDTKEITEKSNVLSNEMKAKNSAVKDVEKKLNKVTKFIEQNKEKFTQLDLEDVQVREKLKHATSKAKKLEKQLQKDKEKVEELKSVPAKSKTVINETTTRNNSLEKEREKEEKKLKEVMDSLKQETQGLQKEKEIQEKELMGFNKSVNEARSKMEVAQSELDIYLSRHNTAVSQLSKAKEALITASETLKERKAAIKDINTKLPQTQQELKEKEKELQKLTQEEINLKSLVHDLFQKVEEAKSSLAMNRSRGKVLDAIIQEKKSGRIPGIYGRLGDLGAIDEKYDIAISSCCHALDYIVVDSIDTAQECVNFLKKHNIGIATFIGLDKMTVWAKKMSKIQTPENTPRLFDLVKVKNEEIRQAFYFALRDTLVANNLDQATRVAYQRDRRWRVVTLQGQIIEQSGTMSGGGSKVMRGRMGSSVIDEISVEEVNKMESQLERHSKQAMQIQEQKVQHEEAVVKLRHSERDMRNTLEKFAASIQGLSEQEEYLCVQIKELEANVLTTAPDRKQQKLLEENVSVFKKEYDAVAEKAGKVEAEIKRLHNTIIDINNRKLKAQQNKLDTINKQLDECASAITKAQVAIKTADRNLKKAQDSVCRTEKEIKDTEKEINDLKTELKNIEDKAEEVINNTKTAETSLPEIQKEHRNLLQELKVIQENEHALQKDALSIKLKLEQIDGHISEHNSKIKYWQKEISKIKLHPVEDNPVETVAVLSQEELEAIKNPESITNEIALLEAQCREMKPNLGAIAEYKKKEDLYLQRVAELDKITSERDNFRQAYEDLRKQRLNEFMAGFYVITNKLKENYQMLTLGGDAELELVDSLDPFSEGIMFSVRPPKKSWKKIFNLSGGEKTLSSLALVFALHHYKPTPLYFMDEIDAALDFKNVSIVAFYIYEQTKNAQFIIISLRNNMFEISDRLIGIYKTYNSTKSVAVNPKQIASKGLC</sequence>
<evidence type="ECO:0000250" key="1"/>
<evidence type="ECO:0000250" key="2">
    <source>
        <dbReference type="UniProtKB" id="Q9NTJ3"/>
    </source>
</evidence>
<evidence type="ECO:0000255" key="3"/>
<evidence type="ECO:0000256" key="4">
    <source>
        <dbReference type="SAM" id="MobiDB-lite"/>
    </source>
</evidence>
<evidence type="ECO:0000305" key="5"/>
<evidence type="ECO:0007744" key="6">
    <source>
    </source>
</evidence>
<evidence type="ECO:0007829" key="7">
    <source>
        <dbReference type="PDB" id="3L51"/>
    </source>
</evidence>
<proteinExistence type="evidence at protein level"/>